<reference key="1">
    <citation type="journal article" date="2002" name="J. Bacteriol.">
        <title>Whole-genome comparison of Mycobacterium tuberculosis clinical and laboratory strains.</title>
        <authorList>
            <person name="Fleischmann R.D."/>
            <person name="Alland D."/>
            <person name="Eisen J.A."/>
            <person name="Carpenter L."/>
            <person name="White O."/>
            <person name="Peterson J.D."/>
            <person name="DeBoy R.T."/>
            <person name="Dodson R.J."/>
            <person name="Gwinn M.L."/>
            <person name="Haft D.H."/>
            <person name="Hickey E.K."/>
            <person name="Kolonay J.F."/>
            <person name="Nelson W.C."/>
            <person name="Umayam L.A."/>
            <person name="Ermolaeva M.D."/>
            <person name="Salzberg S.L."/>
            <person name="Delcher A."/>
            <person name="Utterback T.R."/>
            <person name="Weidman J.F."/>
            <person name="Khouri H.M."/>
            <person name="Gill J."/>
            <person name="Mikula A."/>
            <person name="Bishai W."/>
            <person name="Jacobs W.R. Jr."/>
            <person name="Venter J.C."/>
            <person name="Fraser C.M."/>
        </authorList>
    </citation>
    <scope>NUCLEOTIDE SEQUENCE [LARGE SCALE GENOMIC DNA]</scope>
    <source>
        <strain>CDC 1551 / Oshkosh</strain>
    </source>
</reference>
<keyword id="KW-1185">Reference proteome</keyword>
<keyword id="KW-1277">Toxin-antitoxin system</keyword>
<evidence type="ECO:0000250" key="1"/>
<dbReference type="EMBL" id="AE000516">
    <property type="protein sequence ID" value="AAK46055.1"/>
    <property type="molecule type" value="Genomic_DNA"/>
</dbReference>
<dbReference type="PIR" id="E70985">
    <property type="entry name" value="E70985"/>
</dbReference>
<dbReference type="RefSeq" id="WP_003408528.1">
    <property type="nucleotide sequence ID" value="NZ_KK341227.1"/>
</dbReference>
<dbReference type="SMR" id="P9WJ30"/>
<dbReference type="KEGG" id="mtc:MT1782"/>
<dbReference type="PATRIC" id="fig|83331.31.peg.1912"/>
<dbReference type="HOGENOM" id="CLU_165457_4_0_11"/>
<dbReference type="Proteomes" id="UP000001020">
    <property type="component" value="Chromosome"/>
</dbReference>
<dbReference type="InterPro" id="IPR011660">
    <property type="entry name" value="VapB-like"/>
</dbReference>
<dbReference type="Pfam" id="PF07704">
    <property type="entry name" value="PSK_trans_fac"/>
    <property type="match status" value="1"/>
</dbReference>
<feature type="chain" id="PRO_0000427901" description="Putative antitoxin VapB34">
    <location>
        <begin position="1"/>
        <end position="70"/>
    </location>
</feature>
<gene>
    <name type="primary">vapB34</name>
    <name type="ordered locus">MT1782</name>
</gene>
<accession>P9WJ30</accession>
<accession>L0T7J3</accession>
<accession>O08147</accession>
<accession>P71998</accession>
<accession>Q7D818</accession>
<name>VPB34_MYCTO</name>
<protein>
    <recommendedName>
        <fullName>Putative antitoxin VapB34</fullName>
    </recommendedName>
</protein>
<organism>
    <name type="scientific">Mycobacterium tuberculosis (strain CDC 1551 / Oshkosh)</name>
    <dbReference type="NCBI Taxonomy" id="83331"/>
    <lineage>
        <taxon>Bacteria</taxon>
        <taxon>Bacillati</taxon>
        <taxon>Actinomycetota</taxon>
        <taxon>Actinomycetes</taxon>
        <taxon>Mycobacteriales</taxon>
        <taxon>Mycobacteriaceae</taxon>
        <taxon>Mycobacterium</taxon>
        <taxon>Mycobacterium tuberculosis complex</taxon>
    </lineage>
</organism>
<comment type="function">
    <text evidence="1">Antitoxin component of a possible type II toxin-antitoxin (TA) system. The cognate toxin is VapC34 (By similarity).</text>
</comment>
<proteinExistence type="inferred from homology"/>
<sequence length="70" mass="7608">MELAARMGETLTQAVVVAVREQLARRTGRTRSISLREELAAIGRRCAALPVLDTRAADTILGYDERGLPA</sequence>